<gene>
    <name type="primary">ARF18</name>
    <name type="synonym">ARF10</name>
    <name type="ordered locus">Os06g0685700</name>
    <name type="ordered locus">LOC_Os06g47150</name>
    <name type="ORF">P0009H10.43</name>
    <name type="ORF">P0623A10.1</name>
</gene>
<evidence type="ECO:0000250" key="1"/>
<evidence type="ECO:0000255" key="2">
    <source>
        <dbReference type="PROSITE-ProRule" id="PRU00326"/>
    </source>
</evidence>
<evidence type="ECO:0000255" key="3">
    <source>
        <dbReference type="PROSITE-ProRule" id="PRU01081"/>
    </source>
</evidence>
<evidence type="ECO:0000256" key="4">
    <source>
        <dbReference type="SAM" id="MobiDB-lite"/>
    </source>
</evidence>
<evidence type="ECO:0000269" key="5">
    <source>
    </source>
</evidence>
<evidence type="ECO:0000305" key="6"/>
<sequence>MITFVDSAAKERERESDKCLDPQLWHACAGGMVQMPPVSSKVYYFPQGHAEHAQGHGPVEFPGGRVPALVLCRVAGVRFMADPDTDEVFAKIRLVPVRANEQGYAGDADDGIGAAAAAAAQEEKPASFAKTLTQSDANNGGGFSVPRYCAETIFPRLDYSADPPVQTVLAKDVHGVVWKFRHIYRGTPRRHLLTTGWSTFVNQKKLVAGDSIVFMRTENGDLCVGIRRAKKGGVGGPEFLPPPPPPPPTPAAGGNYGGFSMFLRGDDDGNKMAAAARGKVRARVRPEEVVEAANLAVSGQPFEVVYYPRASTPEFCVKAGAVRAAMRTQWFAGMRFKMAFETEDSSRISWFMGTVSAVQVADPIRWPNSPWRLLQVSWDEPDLLQNVKRVSPWLVELVSNMPAIHLAPFSPPRKKLCVPLYPELPIDGQFPTPMFHGNPLARGVGPMCYFPDGTPAGIQGARHAQFGISLSDLHLNKLQSSLSPHGLHQLDHGMQPRIAAGLIIGHPAARDDISCLLTIGSPQNNKKSDGKKAPAQLMLFGKPILTEQQISLGDAASVDVKKSSSDGNAENTVNKSNSDVSSPRSNQNGTTDNLSCGGVPLCQDNKVLDVGLETGHCKVFMQSEDVGRTLDLSVVGSYEELYRRLADMFGIEKAELMSHVFYRDAAGALKHTGDEPFSEFTKTARRLNILTDTSGDNLAR</sequence>
<protein>
    <recommendedName>
        <fullName>Auxin response factor 18</fullName>
    </recommendedName>
    <alternativeName>
        <fullName>OsARF10</fullName>
    </alternativeName>
</protein>
<dbReference type="EMBL" id="AB071299">
    <property type="protein sequence ID" value="BAB85919.1"/>
    <property type="molecule type" value="mRNA"/>
</dbReference>
<dbReference type="EMBL" id="AP003766">
    <property type="protein sequence ID" value="BAD45570.1"/>
    <property type="molecule type" value="Genomic_DNA"/>
</dbReference>
<dbReference type="EMBL" id="AP005395">
    <property type="protein sequence ID" value="BAD46040.1"/>
    <property type="molecule type" value="Genomic_DNA"/>
</dbReference>
<dbReference type="EMBL" id="AP008212">
    <property type="protein sequence ID" value="BAF20313.1"/>
    <property type="molecule type" value="Genomic_DNA"/>
</dbReference>
<dbReference type="EMBL" id="AP014962">
    <property type="protein sequence ID" value="BAS99192.1"/>
    <property type="molecule type" value="Genomic_DNA"/>
</dbReference>
<dbReference type="EMBL" id="AK100322">
    <property type="protein sequence ID" value="BAG94550.1"/>
    <property type="molecule type" value="mRNA"/>
</dbReference>
<dbReference type="RefSeq" id="XP_015644137.1">
    <property type="nucleotide sequence ID" value="XM_015788651.1"/>
</dbReference>
<dbReference type="RefSeq" id="XP_015644138.1">
    <property type="nucleotide sequence ID" value="XM_015788652.1"/>
</dbReference>
<dbReference type="SMR" id="Q653H7"/>
<dbReference type="FunCoup" id="Q653H7">
    <property type="interactions" value="2464"/>
</dbReference>
<dbReference type="STRING" id="39947.Q653H7"/>
<dbReference type="PaxDb" id="39947-Q653H7"/>
<dbReference type="EnsemblPlants" id="Os06t0685700-01">
    <property type="protein sequence ID" value="Os06t0685700-01"/>
    <property type="gene ID" value="Os06g0685700"/>
</dbReference>
<dbReference type="Gramene" id="Os06t0685700-01">
    <property type="protein sequence ID" value="Os06t0685700-01"/>
    <property type="gene ID" value="Os06g0685700"/>
</dbReference>
<dbReference type="KEGG" id="dosa:Os06g0685700"/>
<dbReference type="eggNOG" id="ENOG502QQ5I">
    <property type="taxonomic scope" value="Eukaryota"/>
</dbReference>
<dbReference type="HOGENOM" id="CLU_002626_3_5_1"/>
<dbReference type="InParanoid" id="Q653H7"/>
<dbReference type="OMA" id="RTQWFAG"/>
<dbReference type="OrthoDB" id="1906869at2759"/>
<dbReference type="PlantReactome" id="R-OSA-5608118">
    <property type="pathway name" value="Auxin signalling"/>
</dbReference>
<dbReference type="Proteomes" id="UP000000763">
    <property type="component" value="Chromosome 6"/>
</dbReference>
<dbReference type="Proteomes" id="UP000059680">
    <property type="component" value="Chromosome 6"/>
</dbReference>
<dbReference type="GO" id="GO:0005634">
    <property type="term" value="C:nucleus"/>
    <property type="evidence" value="ECO:0007669"/>
    <property type="project" value="UniProtKB-SubCell"/>
</dbReference>
<dbReference type="GO" id="GO:0003677">
    <property type="term" value="F:DNA binding"/>
    <property type="evidence" value="ECO:0007669"/>
    <property type="project" value="UniProtKB-KW"/>
</dbReference>
<dbReference type="GO" id="GO:0009734">
    <property type="term" value="P:auxin-activated signaling pathway"/>
    <property type="evidence" value="ECO:0007669"/>
    <property type="project" value="UniProtKB-KW"/>
</dbReference>
<dbReference type="GO" id="GO:0006355">
    <property type="term" value="P:regulation of DNA-templated transcription"/>
    <property type="evidence" value="ECO:0007669"/>
    <property type="project" value="InterPro"/>
</dbReference>
<dbReference type="CDD" id="cd10017">
    <property type="entry name" value="B3_DNA"/>
    <property type="match status" value="1"/>
</dbReference>
<dbReference type="FunFam" id="2.30.30.1040:FF:000002">
    <property type="entry name" value="Auxin response factor"/>
    <property type="match status" value="1"/>
</dbReference>
<dbReference type="FunFam" id="2.40.330.10:FF:000001">
    <property type="entry name" value="Auxin response factor"/>
    <property type="match status" value="1"/>
</dbReference>
<dbReference type="Gene3D" id="2.30.30.1040">
    <property type="match status" value="1"/>
</dbReference>
<dbReference type="Gene3D" id="2.40.330.10">
    <property type="entry name" value="DNA-binding pseudobarrel domain"/>
    <property type="match status" value="1"/>
</dbReference>
<dbReference type="Gene3D" id="3.10.20.90">
    <property type="entry name" value="Phosphatidylinositol 3-kinase Catalytic Subunit, Chain A, domain 1"/>
    <property type="match status" value="1"/>
</dbReference>
<dbReference type="InterPro" id="IPR010525">
    <property type="entry name" value="ARF_dom"/>
</dbReference>
<dbReference type="InterPro" id="IPR044835">
    <property type="entry name" value="ARF_plant"/>
</dbReference>
<dbReference type="InterPro" id="IPR003340">
    <property type="entry name" value="B3_DNA-bd"/>
</dbReference>
<dbReference type="InterPro" id="IPR015300">
    <property type="entry name" value="DNA-bd_pseudobarrel_sf"/>
</dbReference>
<dbReference type="InterPro" id="IPR053793">
    <property type="entry name" value="PB1-like"/>
</dbReference>
<dbReference type="PANTHER" id="PTHR31384:SF160">
    <property type="entry name" value="AUXIN RESPONSE FACTOR 16"/>
    <property type="match status" value="1"/>
</dbReference>
<dbReference type="PANTHER" id="PTHR31384">
    <property type="entry name" value="AUXIN RESPONSE FACTOR 4-RELATED"/>
    <property type="match status" value="1"/>
</dbReference>
<dbReference type="Pfam" id="PF06507">
    <property type="entry name" value="ARF_AD"/>
    <property type="match status" value="1"/>
</dbReference>
<dbReference type="Pfam" id="PF02362">
    <property type="entry name" value="B3"/>
    <property type="match status" value="1"/>
</dbReference>
<dbReference type="SMART" id="SM01019">
    <property type="entry name" value="B3"/>
    <property type="match status" value="1"/>
</dbReference>
<dbReference type="SUPFAM" id="SSF101936">
    <property type="entry name" value="DNA-binding pseudobarrel domain"/>
    <property type="match status" value="1"/>
</dbReference>
<dbReference type="PROSITE" id="PS50863">
    <property type="entry name" value="B3"/>
    <property type="match status" value="1"/>
</dbReference>
<dbReference type="PROSITE" id="PS51745">
    <property type="entry name" value="PB1"/>
    <property type="match status" value="1"/>
</dbReference>
<organism>
    <name type="scientific">Oryza sativa subsp. japonica</name>
    <name type="common">Rice</name>
    <dbReference type="NCBI Taxonomy" id="39947"/>
    <lineage>
        <taxon>Eukaryota</taxon>
        <taxon>Viridiplantae</taxon>
        <taxon>Streptophyta</taxon>
        <taxon>Embryophyta</taxon>
        <taxon>Tracheophyta</taxon>
        <taxon>Spermatophyta</taxon>
        <taxon>Magnoliopsida</taxon>
        <taxon>Liliopsida</taxon>
        <taxon>Poales</taxon>
        <taxon>Poaceae</taxon>
        <taxon>BOP clade</taxon>
        <taxon>Oryzoideae</taxon>
        <taxon>Oryzeae</taxon>
        <taxon>Oryzinae</taxon>
        <taxon>Oryza</taxon>
        <taxon>Oryza sativa</taxon>
    </lineage>
</organism>
<proteinExistence type="evidence at transcript level"/>
<accession>Q653H7</accession>
<accession>A0A0P0X0E7</accession>
<accession>B7EQA3</accession>
<accession>Q8S976</accession>
<feature type="chain" id="PRO_0000299277" description="Auxin response factor 18">
    <location>
        <begin position="1"/>
        <end position="700"/>
    </location>
</feature>
<feature type="domain" description="PB1" evidence="3">
    <location>
        <begin position="614"/>
        <end position="697"/>
    </location>
</feature>
<feature type="DNA-binding region" description="TF-B3" evidence="2">
    <location>
        <begin position="128"/>
        <end position="230"/>
    </location>
</feature>
<feature type="region of interest" description="Disordered" evidence="4">
    <location>
        <begin position="234"/>
        <end position="254"/>
    </location>
</feature>
<feature type="region of interest" description="Disordered" evidence="4">
    <location>
        <begin position="560"/>
        <end position="595"/>
    </location>
</feature>
<feature type="compositionally biased region" description="Pro residues" evidence="4">
    <location>
        <begin position="239"/>
        <end position="250"/>
    </location>
</feature>
<feature type="compositionally biased region" description="Polar residues" evidence="4">
    <location>
        <begin position="565"/>
        <end position="594"/>
    </location>
</feature>
<feature type="sequence conflict" description="In Ref. 1; BAB85919." evidence="6" ref="1">
    <original>L</original>
    <variation>F</variation>
    <location>
        <position position="487"/>
    </location>
</feature>
<keyword id="KW-0927">Auxin signaling pathway</keyword>
<keyword id="KW-0238">DNA-binding</keyword>
<keyword id="KW-0539">Nucleus</keyword>
<keyword id="KW-1185">Reference proteome</keyword>
<keyword id="KW-0804">Transcription</keyword>
<keyword id="KW-0805">Transcription regulation</keyword>
<comment type="function">
    <text>Auxin response factors (ARFs) are transcriptional factors that bind specifically to the DNA sequence 5'-TGTCTC-3' found in the auxin-responsive promoter elements (AuxREs).</text>
</comment>
<comment type="subunit">
    <text evidence="1">Homodimers and heterodimers.</text>
</comment>
<comment type="subcellular location">
    <subcellularLocation>
        <location evidence="2">Nucleus</location>
    </subcellularLocation>
</comment>
<comment type="tissue specificity">
    <text evidence="5">Expressed in roots, culms, leaves and young panicles.</text>
</comment>
<comment type="domain">
    <text>Interactions between auxin response factors (ARFs) and Aux/IAA proteins occur through their C-terminal dimerization domains III and IV.</text>
</comment>
<comment type="similarity">
    <text evidence="6">Belongs to the ARF family.</text>
</comment>
<reference key="1">
    <citation type="journal article" date="2001" name="Genes Genet. Syst.">
        <title>Auxin response factor family in rice.</title>
        <authorList>
            <person name="Sato Y."/>
            <person name="Nishimura A."/>
            <person name="Ito M."/>
            <person name="Ashikari M."/>
            <person name="Hirano H.-Y."/>
            <person name="Matsuoka M."/>
        </authorList>
    </citation>
    <scope>NUCLEOTIDE SEQUENCE [MRNA]</scope>
    <source>
        <strain>cv. Nipponbare</strain>
    </source>
</reference>
<reference key="2">
    <citation type="journal article" date="2005" name="Nature">
        <title>The map-based sequence of the rice genome.</title>
        <authorList>
            <consortium name="International rice genome sequencing project (IRGSP)"/>
        </authorList>
    </citation>
    <scope>NUCLEOTIDE SEQUENCE [LARGE SCALE GENOMIC DNA]</scope>
    <source>
        <strain>cv. Nipponbare</strain>
    </source>
</reference>
<reference key="3">
    <citation type="journal article" date="2008" name="Nucleic Acids Res.">
        <title>The rice annotation project database (RAP-DB): 2008 update.</title>
        <authorList>
            <consortium name="The rice annotation project (RAP)"/>
        </authorList>
    </citation>
    <scope>GENOME REANNOTATION</scope>
    <source>
        <strain>cv. Nipponbare</strain>
    </source>
</reference>
<reference key="4">
    <citation type="journal article" date="2013" name="Rice">
        <title>Improvement of the Oryza sativa Nipponbare reference genome using next generation sequence and optical map data.</title>
        <authorList>
            <person name="Kawahara Y."/>
            <person name="de la Bastide M."/>
            <person name="Hamilton J.P."/>
            <person name="Kanamori H."/>
            <person name="McCombie W.R."/>
            <person name="Ouyang S."/>
            <person name="Schwartz D.C."/>
            <person name="Tanaka T."/>
            <person name="Wu J."/>
            <person name="Zhou S."/>
            <person name="Childs K.L."/>
            <person name="Davidson R.M."/>
            <person name="Lin H."/>
            <person name="Quesada-Ocampo L."/>
            <person name="Vaillancourt B."/>
            <person name="Sakai H."/>
            <person name="Lee S.S."/>
            <person name="Kim J."/>
            <person name="Numa H."/>
            <person name="Itoh T."/>
            <person name="Buell C.R."/>
            <person name="Matsumoto T."/>
        </authorList>
    </citation>
    <scope>GENOME REANNOTATION</scope>
    <source>
        <strain>cv. Nipponbare</strain>
    </source>
</reference>
<reference key="5">
    <citation type="journal article" date="2003" name="Science">
        <title>Collection, mapping, and annotation of over 28,000 cDNA clones from japonica rice.</title>
        <authorList>
            <consortium name="The rice full-length cDNA consortium"/>
        </authorList>
    </citation>
    <scope>NUCLEOTIDE SEQUENCE [LARGE SCALE MRNA]</scope>
    <source>
        <strain>cv. Nipponbare</strain>
    </source>
</reference>
<reference key="6">
    <citation type="journal article" date="2007" name="Gene">
        <title>Genome-wide analysis of the auxin response factors (ARF) gene family in rice (Oryza sativa).</title>
        <authorList>
            <person name="Wang D."/>
            <person name="Pei K."/>
            <person name="Fu Y."/>
            <person name="Sun Z."/>
            <person name="Li S."/>
            <person name="Liu H."/>
            <person name="Tang K."/>
            <person name="Han B."/>
            <person name="Tao Y."/>
        </authorList>
    </citation>
    <scope>GENE FAMILY</scope>
    <scope>TISSUE SPECIFICITY</scope>
    <scope>NOMENCLATURE</scope>
</reference>
<name>ARFR_ORYSJ</name>